<comment type="function">
    <text evidence="2">Plays a role in regulating cardiac sodium current.</text>
</comment>
<comment type="catalytic activity">
    <reaction evidence="2">
        <text>sn-glycerol 3-phosphate + NAD(+) = dihydroxyacetone phosphate + NADH + H(+)</text>
        <dbReference type="Rhea" id="RHEA:11092"/>
        <dbReference type="ChEBI" id="CHEBI:15378"/>
        <dbReference type="ChEBI" id="CHEBI:57540"/>
        <dbReference type="ChEBI" id="CHEBI:57597"/>
        <dbReference type="ChEBI" id="CHEBI:57642"/>
        <dbReference type="ChEBI" id="CHEBI:57945"/>
        <dbReference type="EC" id="1.1.1.8"/>
    </reaction>
    <physiologicalReaction direction="left-to-right" evidence="2">
        <dbReference type="Rhea" id="RHEA:11093"/>
    </physiologicalReaction>
</comment>
<comment type="subcellular location">
    <subcellularLocation>
        <location evidence="3">Cytoplasm</location>
    </subcellularLocation>
</comment>
<comment type="similarity">
    <text evidence="3">Belongs to the NAD-dependent glycerol-3-phosphate dehydrogenase family.</text>
</comment>
<protein>
    <recommendedName>
        <fullName>Glycerol-3-phosphate dehydrogenase 1-like protein</fullName>
        <ecNumber>1.1.1.8</ecNumber>
    </recommendedName>
</protein>
<keyword id="KW-0963">Cytoplasm</keyword>
<keyword id="KW-0520">NAD</keyword>
<keyword id="KW-0560">Oxidoreductase</keyword>
<keyword id="KW-1185">Reference proteome</keyword>
<dbReference type="EC" id="1.1.1.8"/>
<dbReference type="EMBL" id="BC061407">
    <property type="protein sequence ID" value="AAH61407.1"/>
    <property type="molecule type" value="mRNA"/>
</dbReference>
<dbReference type="RefSeq" id="NP_989027.1">
    <property type="nucleotide sequence ID" value="NM_203696.1"/>
</dbReference>
<dbReference type="SMR" id="Q6P824"/>
<dbReference type="FunCoup" id="Q6P824">
    <property type="interactions" value="1232"/>
</dbReference>
<dbReference type="STRING" id="8364.ENSXETP00000022012"/>
<dbReference type="PaxDb" id="8364-ENSXETP00000032859"/>
<dbReference type="DNASU" id="394623"/>
<dbReference type="GeneID" id="394623"/>
<dbReference type="KEGG" id="xtr:394623"/>
<dbReference type="AGR" id="Xenbase:XB-GENE-969902"/>
<dbReference type="CTD" id="23171"/>
<dbReference type="Xenbase" id="XB-GENE-969902">
    <property type="gene designation" value="gpd1l"/>
</dbReference>
<dbReference type="eggNOG" id="KOG2711">
    <property type="taxonomic scope" value="Eukaryota"/>
</dbReference>
<dbReference type="HOGENOM" id="CLU_033449_2_2_1"/>
<dbReference type="InParanoid" id="Q6P824"/>
<dbReference type="OMA" id="YDTPPMD"/>
<dbReference type="OrthoDB" id="10263760at2759"/>
<dbReference type="PhylomeDB" id="Q6P824"/>
<dbReference type="TreeFam" id="TF300836"/>
<dbReference type="Reactome" id="R-XTR-1483166">
    <property type="pathway name" value="Synthesis of PA"/>
</dbReference>
<dbReference type="Proteomes" id="UP000008143">
    <property type="component" value="Chromosome 6"/>
</dbReference>
<dbReference type="Bgee" id="ENSXETG00000015022">
    <property type="expression patterns" value="Expressed in embryo and 13 other cell types or tissues"/>
</dbReference>
<dbReference type="GO" id="GO:0005737">
    <property type="term" value="C:cytoplasm"/>
    <property type="evidence" value="ECO:0007669"/>
    <property type="project" value="UniProtKB-SubCell"/>
</dbReference>
<dbReference type="GO" id="GO:0141152">
    <property type="term" value="F:glycerol-3-phosphate dehydrogenase (NAD+) activity"/>
    <property type="evidence" value="ECO:0007669"/>
    <property type="project" value="UniProtKB-EC"/>
</dbReference>
<dbReference type="GO" id="GO:0051287">
    <property type="term" value="F:NAD binding"/>
    <property type="evidence" value="ECO:0007669"/>
    <property type="project" value="InterPro"/>
</dbReference>
<dbReference type="GO" id="GO:0042803">
    <property type="term" value="F:protein homodimerization activity"/>
    <property type="evidence" value="ECO:0007669"/>
    <property type="project" value="InterPro"/>
</dbReference>
<dbReference type="GO" id="GO:0005975">
    <property type="term" value="P:carbohydrate metabolic process"/>
    <property type="evidence" value="ECO:0007669"/>
    <property type="project" value="InterPro"/>
</dbReference>
<dbReference type="GO" id="GO:0046168">
    <property type="term" value="P:glycerol-3-phosphate catabolic process"/>
    <property type="evidence" value="ECO:0007669"/>
    <property type="project" value="InterPro"/>
</dbReference>
<dbReference type="FunFam" id="3.40.50.720:FF:000088">
    <property type="entry name" value="Glycerol-3-phosphate dehydrogenase [NAD(+)]"/>
    <property type="match status" value="1"/>
</dbReference>
<dbReference type="FunFam" id="1.10.1040.10:FF:000084">
    <property type="entry name" value="Glycerol-3-phosphate dehydrogenase [NAD(+)], cytoplasmic"/>
    <property type="match status" value="1"/>
</dbReference>
<dbReference type="Gene3D" id="1.10.1040.10">
    <property type="entry name" value="N-(1-d-carboxylethyl)-l-norvaline Dehydrogenase, domain 2"/>
    <property type="match status" value="1"/>
</dbReference>
<dbReference type="Gene3D" id="3.40.50.720">
    <property type="entry name" value="NAD(P)-binding Rossmann-like Domain"/>
    <property type="match status" value="1"/>
</dbReference>
<dbReference type="InterPro" id="IPR008927">
    <property type="entry name" value="6-PGluconate_DH-like_C_sf"/>
</dbReference>
<dbReference type="InterPro" id="IPR013328">
    <property type="entry name" value="6PGD_dom2"/>
</dbReference>
<dbReference type="InterPro" id="IPR006168">
    <property type="entry name" value="G3P_DH_NAD-dep"/>
</dbReference>
<dbReference type="InterPro" id="IPR006109">
    <property type="entry name" value="G3P_DH_NAD-dep_C"/>
</dbReference>
<dbReference type="InterPro" id="IPR017751">
    <property type="entry name" value="G3P_DH_NAD-dep_euk"/>
</dbReference>
<dbReference type="InterPro" id="IPR011128">
    <property type="entry name" value="G3P_DH_NAD-dep_N"/>
</dbReference>
<dbReference type="InterPro" id="IPR036291">
    <property type="entry name" value="NAD(P)-bd_dom_sf"/>
</dbReference>
<dbReference type="NCBIfam" id="TIGR03376">
    <property type="entry name" value="glycerol3P_DH"/>
    <property type="match status" value="1"/>
</dbReference>
<dbReference type="PANTHER" id="PTHR11728">
    <property type="entry name" value="GLYCEROL-3-PHOSPHATE DEHYDROGENASE"/>
    <property type="match status" value="1"/>
</dbReference>
<dbReference type="PANTHER" id="PTHR11728:SF7">
    <property type="entry name" value="GLYCEROL-3-PHOSPHATE DEHYDROGENASE 1-LIKE PROTEIN"/>
    <property type="match status" value="1"/>
</dbReference>
<dbReference type="Pfam" id="PF07479">
    <property type="entry name" value="NAD_Gly3P_dh_C"/>
    <property type="match status" value="1"/>
</dbReference>
<dbReference type="Pfam" id="PF01210">
    <property type="entry name" value="NAD_Gly3P_dh_N"/>
    <property type="match status" value="1"/>
</dbReference>
<dbReference type="PIRSF" id="PIRSF000114">
    <property type="entry name" value="Glycerol-3-P_dh"/>
    <property type="match status" value="1"/>
</dbReference>
<dbReference type="PRINTS" id="PR00077">
    <property type="entry name" value="GPDHDRGNASE"/>
</dbReference>
<dbReference type="SUPFAM" id="SSF48179">
    <property type="entry name" value="6-phosphogluconate dehydrogenase C-terminal domain-like"/>
    <property type="match status" value="1"/>
</dbReference>
<dbReference type="SUPFAM" id="SSF51735">
    <property type="entry name" value="NAD(P)-binding Rossmann-fold domains"/>
    <property type="match status" value="1"/>
</dbReference>
<sequence length="352" mass="38464">MALAGPLKVCIVGSGNWGSAVAKIIGHNVKNLKKFASTVNMWVFEENINGRKLTEIINTEHENVKYLPGYKLPENVVAVPNLSDAVKDADLLIFVIPHQFIHKICQEISGKVHRNALGITLIKGIDEGPEGLRLISDIIREKMDIDVSVLMGANIANEVAAEKFCETTIGSKNKEHGLLFKELLQTPNFRITVVEDADTVELCGALKNIVAVAAGFCDGLGCGDNTKAAVIRLGLMEMIAFANVFCKGPVSIATFLESCGVADLITTCYGGRNRKVSEAFVKSGKSIEELEKEMLNGQKLQGPQTSAEVYRILQQKNMVNKFPLFTAVYQICYEGKPVEDVISCLQSHPEHM</sequence>
<evidence type="ECO:0000250" key="1"/>
<evidence type="ECO:0000250" key="2">
    <source>
        <dbReference type="UniProtKB" id="Q8N335"/>
    </source>
</evidence>
<evidence type="ECO:0000305" key="3"/>
<organism>
    <name type="scientific">Xenopus tropicalis</name>
    <name type="common">Western clawed frog</name>
    <name type="synonym">Silurana tropicalis</name>
    <dbReference type="NCBI Taxonomy" id="8364"/>
    <lineage>
        <taxon>Eukaryota</taxon>
        <taxon>Metazoa</taxon>
        <taxon>Chordata</taxon>
        <taxon>Craniata</taxon>
        <taxon>Vertebrata</taxon>
        <taxon>Euteleostomi</taxon>
        <taxon>Amphibia</taxon>
        <taxon>Batrachia</taxon>
        <taxon>Anura</taxon>
        <taxon>Pipoidea</taxon>
        <taxon>Pipidae</taxon>
        <taxon>Xenopodinae</taxon>
        <taxon>Xenopus</taxon>
        <taxon>Silurana</taxon>
    </lineage>
</organism>
<gene>
    <name type="primary">gpd1l</name>
</gene>
<accession>Q6P824</accession>
<reference key="1">
    <citation type="submission" date="2003-11" db="EMBL/GenBank/DDBJ databases">
        <authorList>
            <consortium name="NIH - Xenopus Gene Collection (XGC) project"/>
        </authorList>
    </citation>
    <scope>NUCLEOTIDE SEQUENCE [LARGE SCALE MRNA]</scope>
    <source>
        <tissue>Embryo</tissue>
    </source>
</reference>
<feature type="chain" id="PRO_0000286516" description="Glycerol-3-phosphate dehydrogenase 1-like protein">
    <location>
        <begin position="1"/>
        <end position="352"/>
    </location>
</feature>
<feature type="active site" description="Proton acceptor" evidence="1">
    <location>
        <position position="207"/>
    </location>
</feature>
<feature type="binding site" evidence="2">
    <location>
        <begin position="13"/>
        <end position="18"/>
    </location>
    <ligand>
        <name>NAD(+)</name>
        <dbReference type="ChEBI" id="CHEBI:57540"/>
    </ligand>
</feature>
<feature type="binding site" evidence="1">
    <location>
        <position position="123"/>
    </location>
    <ligand>
        <name>substrate</name>
    </ligand>
</feature>
<feature type="binding site" evidence="2">
    <location>
        <position position="156"/>
    </location>
    <ligand>
        <name>NAD(+)</name>
        <dbReference type="ChEBI" id="CHEBI:57540"/>
    </ligand>
</feature>
<feature type="binding site" evidence="1">
    <location>
        <begin position="272"/>
        <end position="273"/>
    </location>
    <ligand>
        <name>substrate</name>
    </ligand>
</feature>
<feature type="binding site" evidence="1">
    <location>
        <position position="272"/>
    </location>
    <ligand>
        <name>NAD(+)</name>
        <dbReference type="ChEBI" id="CHEBI:57540"/>
    </ligand>
</feature>
<feature type="binding site" evidence="2">
    <location>
        <position position="299"/>
    </location>
    <ligand>
        <name>NAD(+)</name>
        <dbReference type="ChEBI" id="CHEBI:57540"/>
    </ligand>
</feature>
<feature type="binding site" evidence="1">
    <location>
        <position position="301"/>
    </location>
    <ligand>
        <name>NAD(+)</name>
        <dbReference type="ChEBI" id="CHEBI:57540"/>
    </ligand>
</feature>
<name>GPD1L_XENTR</name>
<proteinExistence type="evidence at transcript level"/>